<sequence>MAGHSKWANIKHKKAKEDRKRGKLFSKLSKMITVAAREGGGDPEMNPDLRLAIQKAKDNNMPNDNIERAIKRGTGELEGVKYEKFVYEGYGPGGVALYLELMSDNRNRTAAEIRHVLSKNGGNLGESGCVSWMFKRRGQLIVDLNESDFDEDELMLEALEAGAEDVVTEDNLLTIYTDPSDFEEVRKQLEEQGIKFSSADIAMVPENNVNVDDKSTAKKVLKLMDALEDHDDVQEVYSNFDIPDEIMEEITEE</sequence>
<keyword id="KW-0963">Cytoplasm</keyword>
<keyword id="KW-0238">DNA-binding</keyword>
<keyword id="KW-1185">Reference proteome</keyword>
<keyword id="KW-0804">Transcription</keyword>
<keyword id="KW-0805">Transcription regulation</keyword>
<accession>B8CXG6</accession>
<reference key="1">
    <citation type="journal article" date="2009" name="PLoS ONE">
        <title>Genome analysis of the anaerobic thermohalophilic bacterium Halothermothrix orenii.</title>
        <authorList>
            <person name="Mavromatis K."/>
            <person name="Ivanova N."/>
            <person name="Anderson I."/>
            <person name="Lykidis A."/>
            <person name="Hooper S.D."/>
            <person name="Sun H."/>
            <person name="Kunin V."/>
            <person name="Lapidus A."/>
            <person name="Hugenholtz P."/>
            <person name="Patel B."/>
            <person name="Kyrpides N.C."/>
        </authorList>
    </citation>
    <scope>NUCLEOTIDE SEQUENCE [LARGE SCALE GENOMIC DNA]</scope>
    <source>
        <strain>H 168 / OCM 544 / DSM 9562</strain>
    </source>
</reference>
<dbReference type="EMBL" id="CP001098">
    <property type="protein sequence ID" value="ACL69985.1"/>
    <property type="molecule type" value="Genomic_DNA"/>
</dbReference>
<dbReference type="RefSeq" id="WP_012636169.1">
    <property type="nucleotide sequence ID" value="NC_011899.1"/>
</dbReference>
<dbReference type="SMR" id="B8CXG6"/>
<dbReference type="STRING" id="373903.Hore_12350"/>
<dbReference type="KEGG" id="hor:Hore_12350"/>
<dbReference type="eggNOG" id="COG0217">
    <property type="taxonomic scope" value="Bacteria"/>
</dbReference>
<dbReference type="HOGENOM" id="CLU_062974_2_2_9"/>
<dbReference type="OrthoDB" id="9781053at2"/>
<dbReference type="Proteomes" id="UP000000719">
    <property type="component" value="Chromosome"/>
</dbReference>
<dbReference type="GO" id="GO:0005829">
    <property type="term" value="C:cytosol"/>
    <property type="evidence" value="ECO:0007669"/>
    <property type="project" value="TreeGrafter"/>
</dbReference>
<dbReference type="GO" id="GO:0003677">
    <property type="term" value="F:DNA binding"/>
    <property type="evidence" value="ECO:0007669"/>
    <property type="project" value="UniProtKB-UniRule"/>
</dbReference>
<dbReference type="GO" id="GO:0006355">
    <property type="term" value="P:regulation of DNA-templated transcription"/>
    <property type="evidence" value="ECO:0007669"/>
    <property type="project" value="UniProtKB-UniRule"/>
</dbReference>
<dbReference type="FunFam" id="1.10.10.200:FF:000002">
    <property type="entry name" value="Probable transcriptional regulatory protein CLM62_37755"/>
    <property type="match status" value="1"/>
</dbReference>
<dbReference type="FunFam" id="3.30.70.980:FF:000002">
    <property type="entry name" value="Probable transcriptional regulatory protein YebC"/>
    <property type="match status" value="1"/>
</dbReference>
<dbReference type="Gene3D" id="1.10.10.200">
    <property type="match status" value="1"/>
</dbReference>
<dbReference type="Gene3D" id="3.30.70.980">
    <property type="match status" value="2"/>
</dbReference>
<dbReference type="HAMAP" id="MF_00693">
    <property type="entry name" value="Transcrip_reg_TACO1"/>
    <property type="match status" value="1"/>
</dbReference>
<dbReference type="InterPro" id="IPR017856">
    <property type="entry name" value="Integrase-like_N"/>
</dbReference>
<dbReference type="InterPro" id="IPR048300">
    <property type="entry name" value="TACO1_YebC-like_2nd/3rd_dom"/>
</dbReference>
<dbReference type="InterPro" id="IPR049083">
    <property type="entry name" value="TACO1_YebC_N"/>
</dbReference>
<dbReference type="InterPro" id="IPR002876">
    <property type="entry name" value="Transcrip_reg_TACO1-like"/>
</dbReference>
<dbReference type="InterPro" id="IPR026564">
    <property type="entry name" value="Transcrip_reg_TACO1-like_dom3"/>
</dbReference>
<dbReference type="InterPro" id="IPR029072">
    <property type="entry name" value="YebC-like"/>
</dbReference>
<dbReference type="NCBIfam" id="NF001030">
    <property type="entry name" value="PRK00110.1"/>
    <property type="match status" value="1"/>
</dbReference>
<dbReference type="NCBIfam" id="NF009044">
    <property type="entry name" value="PRK12378.1"/>
    <property type="match status" value="1"/>
</dbReference>
<dbReference type="NCBIfam" id="TIGR01033">
    <property type="entry name" value="YebC/PmpR family DNA-binding transcriptional regulator"/>
    <property type="match status" value="1"/>
</dbReference>
<dbReference type="PANTHER" id="PTHR12532:SF6">
    <property type="entry name" value="TRANSCRIPTIONAL REGULATORY PROTEIN YEBC-RELATED"/>
    <property type="match status" value="1"/>
</dbReference>
<dbReference type="PANTHER" id="PTHR12532">
    <property type="entry name" value="TRANSLATIONAL ACTIVATOR OF CYTOCHROME C OXIDASE 1"/>
    <property type="match status" value="1"/>
</dbReference>
<dbReference type="Pfam" id="PF20772">
    <property type="entry name" value="TACO1_YebC_N"/>
    <property type="match status" value="1"/>
</dbReference>
<dbReference type="Pfam" id="PF01709">
    <property type="entry name" value="Transcrip_reg"/>
    <property type="match status" value="1"/>
</dbReference>
<dbReference type="SUPFAM" id="SSF75625">
    <property type="entry name" value="YebC-like"/>
    <property type="match status" value="1"/>
</dbReference>
<proteinExistence type="inferred from homology"/>
<gene>
    <name type="ordered locus">Hore_12350</name>
</gene>
<feature type="chain" id="PRO_1000212613" description="Probable transcriptional regulatory protein Hore_12350">
    <location>
        <begin position="1"/>
        <end position="253"/>
    </location>
</feature>
<feature type="region of interest" description="Disordered" evidence="2">
    <location>
        <begin position="1"/>
        <end position="21"/>
    </location>
</feature>
<evidence type="ECO:0000255" key="1">
    <source>
        <dbReference type="HAMAP-Rule" id="MF_00693"/>
    </source>
</evidence>
<evidence type="ECO:0000256" key="2">
    <source>
        <dbReference type="SAM" id="MobiDB-lite"/>
    </source>
</evidence>
<protein>
    <recommendedName>
        <fullName evidence="1">Probable transcriptional regulatory protein Hore_12350</fullName>
    </recommendedName>
</protein>
<organism>
    <name type="scientific">Halothermothrix orenii (strain H 168 / OCM 544 / DSM 9562)</name>
    <dbReference type="NCBI Taxonomy" id="373903"/>
    <lineage>
        <taxon>Bacteria</taxon>
        <taxon>Bacillati</taxon>
        <taxon>Bacillota</taxon>
        <taxon>Clostridia</taxon>
        <taxon>Halanaerobiales</taxon>
        <taxon>Halothermotrichaceae</taxon>
        <taxon>Halothermothrix</taxon>
    </lineage>
</organism>
<comment type="subcellular location">
    <subcellularLocation>
        <location evidence="1">Cytoplasm</location>
    </subcellularLocation>
</comment>
<comment type="similarity">
    <text evidence="1">Belongs to the TACO1 family.</text>
</comment>
<name>Y1235_HALOH</name>